<reference key="1">
    <citation type="journal article" date="2003" name="Nature">
        <title>The genome sequence of Bacillus anthracis Ames and comparison to closely related bacteria.</title>
        <authorList>
            <person name="Read T.D."/>
            <person name="Peterson S.N."/>
            <person name="Tourasse N.J."/>
            <person name="Baillie L.W."/>
            <person name="Paulsen I.T."/>
            <person name="Nelson K.E."/>
            <person name="Tettelin H."/>
            <person name="Fouts D.E."/>
            <person name="Eisen J.A."/>
            <person name="Gill S.R."/>
            <person name="Holtzapple E.K."/>
            <person name="Okstad O.A."/>
            <person name="Helgason E."/>
            <person name="Rilstone J."/>
            <person name="Wu M."/>
            <person name="Kolonay J.F."/>
            <person name="Beanan M.J."/>
            <person name="Dodson R.J."/>
            <person name="Brinkac L.M."/>
            <person name="Gwinn M.L."/>
            <person name="DeBoy R.T."/>
            <person name="Madpu R."/>
            <person name="Daugherty S.C."/>
            <person name="Durkin A.S."/>
            <person name="Haft D.H."/>
            <person name="Nelson W.C."/>
            <person name="Peterson J.D."/>
            <person name="Pop M."/>
            <person name="Khouri H.M."/>
            <person name="Radune D."/>
            <person name="Benton J.L."/>
            <person name="Mahamoud Y."/>
            <person name="Jiang L."/>
            <person name="Hance I.R."/>
            <person name="Weidman J.F."/>
            <person name="Berry K.J."/>
            <person name="Plaut R.D."/>
            <person name="Wolf A.M."/>
            <person name="Watkins K.L."/>
            <person name="Nierman W.C."/>
            <person name="Hazen A."/>
            <person name="Cline R.T."/>
            <person name="Redmond C."/>
            <person name="Thwaite J.E."/>
            <person name="White O."/>
            <person name="Salzberg S.L."/>
            <person name="Thomason B."/>
            <person name="Friedlander A.M."/>
            <person name="Koehler T.M."/>
            <person name="Hanna P.C."/>
            <person name="Kolstoe A.-B."/>
            <person name="Fraser C.M."/>
        </authorList>
    </citation>
    <scope>NUCLEOTIDE SEQUENCE [LARGE SCALE GENOMIC DNA]</scope>
    <source>
        <strain>Ames / isolate Porton</strain>
    </source>
</reference>
<reference key="2">
    <citation type="journal article" date="2009" name="J. Bacteriol.">
        <title>The complete genome sequence of Bacillus anthracis Ames 'Ancestor'.</title>
        <authorList>
            <person name="Ravel J."/>
            <person name="Jiang L."/>
            <person name="Stanley S.T."/>
            <person name="Wilson M.R."/>
            <person name="Decker R.S."/>
            <person name="Read T.D."/>
            <person name="Worsham P."/>
            <person name="Keim P.S."/>
            <person name="Salzberg S.L."/>
            <person name="Fraser-Liggett C.M."/>
            <person name="Rasko D.A."/>
        </authorList>
    </citation>
    <scope>NUCLEOTIDE SEQUENCE [LARGE SCALE GENOMIC DNA]</scope>
    <source>
        <strain>Ames ancestor</strain>
    </source>
</reference>
<reference key="3">
    <citation type="submission" date="2004-01" db="EMBL/GenBank/DDBJ databases">
        <title>Complete genome sequence of Bacillus anthracis Sterne.</title>
        <authorList>
            <person name="Brettin T.S."/>
            <person name="Bruce D."/>
            <person name="Challacombe J.F."/>
            <person name="Gilna P."/>
            <person name="Han C."/>
            <person name="Hill K."/>
            <person name="Hitchcock P."/>
            <person name="Jackson P."/>
            <person name="Keim P."/>
            <person name="Longmire J."/>
            <person name="Lucas S."/>
            <person name="Okinaka R."/>
            <person name="Richardson P."/>
            <person name="Rubin E."/>
            <person name="Tice H."/>
        </authorList>
    </citation>
    <scope>NUCLEOTIDE SEQUENCE [LARGE SCALE GENOMIC DNA]</scope>
    <source>
        <strain>Sterne</strain>
    </source>
</reference>
<feature type="chain" id="PRO_0000201241" description="Cardiolipin synthase 1">
    <location>
        <begin position="1"/>
        <end position="509"/>
    </location>
</feature>
<feature type="transmembrane region" description="Helical" evidence="1">
    <location>
        <begin position="4"/>
        <end position="24"/>
    </location>
</feature>
<feature type="transmembrane region" description="Helical" evidence="1">
    <location>
        <begin position="30"/>
        <end position="50"/>
    </location>
</feature>
<feature type="transmembrane region" description="Helical" evidence="1">
    <location>
        <begin position="59"/>
        <end position="79"/>
    </location>
</feature>
<feature type="domain" description="PLD phosphodiesterase 1" evidence="1">
    <location>
        <begin position="238"/>
        <end position="265"/>
    </location>
</feature>
<feature type="domain" description="PLD phosphodiesterase 2" evidence="1">
    <location>
        <begin position="422"/>
        <end position="449"/>
    </location>
</feature>
<feature type="active site" evidence="1">
    <location>
        <position position="243"/>
    </location>
</feature>
<feature type="active site" evidence="1">
    <location>
        <position position="245"/>
    </location>
</feature>
<feature type="active site" evidence="1">
    <location>
        <position position="250"/>
    </location>
</feature>
<feature type="active site" evidence="1">
    <location>
        <position position="427"/>
    </location>
</feature>
<feature type="active site" evidence="1">
    <location>
        <position position="429"/>
    </location>
</feature>
<feature type="active site" evidence="1">
    <location>
        <position position="434"/>
    </location>
</feature>
<evidence type="ECO:0000255" key="1">
    <source>
        <dbReference type="HAMAP-Rule" id="MF_01916"/>
    </source>
</evidence>
<comment type="function">
    <text evidence="1">Catalyzes the reversible phosphatidyl group transfer from one phosphatidylglycerol molecule to another to form cardiolipin (CL) (diphosphatidylglycerol) and glycerol.</text>
</comment>
<comment type="catalytic activity">
    <reaction evidence="1">
        <text>2 a 1,2-diacyl-sn-glycero-3-phospho-(1'-sn-glycerol) = a cardiolipin + glycerol</text>
        <dbReference type="Rhea" id="RHEA:31451"/>
        <dbReference type="ChEBI" id="CHEBI:17754"/>
        <dbReference type="ChEBI" id="CHEBI:62237"/>
        <dbReference type="ChEBI" id="CHEBI:64716"/>
    </reaction>
</comment>
<comment type="subcellular location">
    <subcellularLocation>
        <location evidence="1">Cell membrane</location>
        <topology evidence="1">Multi-pass membrane protein</topology>
    </subcellularLocation>
</comment>
<comment type="similarity">
    <text evidence="1">Belongs to the phospholipase D family. Cardiolipin synthase subfamily.</text>
</comment>
<keyword id="KW-1003">Cell membrane</keyword>
<keyword id="KW-0444">Lipid biosynthesis</keyword>
<keyword id="KW-0443">Lipid metabolism</keyword>
<keyword id="KW-0472">Membrane</keyword>
<keyword id="KW-0594">Phospholipid biosynthesis</keyword>
<keyword id="KW-1208">Phospholipid metabolism</keyword>
<keyword id="KW-1185">Reference proteome</keyword>
<keyword id="KW-0677">Repeat</keyword>
<keyword id="KW-0808">Transferase</keyword>
<keyword id="KW-0812">Transmembrane</keyword>
<keyword id="KW-1133">Transmembrane helix</keyword>
<gene>
    <name type="primary">cls1</name>
    <name type="synonym">cls-1</name>
    <name type="ordered locus">BA_0625</name>
    <name type="ordered locus">GBAA_0625</name>
    <name type="ordered locus">BAS0592</name>
</gene>
<organism>
    <name type="scientific">Bacillus anthracis</name>
    <dbReference type="NCBI Taxonomy" id="1392"/>
    <lineage>
        <taxon>Bacteria</taxon>
        <taxon>Bacillati</taxon>
        <taxon>Bacillota</taxon>
        <taxon>Bacilli</taxon>
        <taxon>Bacillales</taxon>
        <taxon>Bacillaceae</taxon>
        <taxon>Bacillus</taxon>
        <taxon>Bacillus cereus group</taxon>
    </lineage>
</organism>
<accession>Q81V75</accession>
<accession>Q6I3G1</accession>
<accession>Q6KX75</accession>
<sequence length="509" mass="58107">MKKPIIQLLLIFTIVSIVPFLLNTSYISLYTFVGVLWSITIVGISFVIFIENRSPQSTLAWFLVLALLPVVGVLLYSIFGRSRWRRKKHLHRSEEQRKLFREILEGRRLELSLKVPLSERSVHLTEVVQKFGGGPAADRTTTKLLTNGDQTFSEILQAIEQAKHHIHIQYYIYKSDEIGTKVRDALIKKAKDGVIVRFLYDGLGSNTLRRRFLQPMKEAGIEIVEFDPIFSAWLLETVNYRNHRKIVIVDGEIGFTGGLNVGDEYLGRSKKFPVWRDSHLKVEGKALYKLQAIFLEDWLYASSGLNTYSWDPFMNRQYFPGKEISNAEGAVQIVASGPSSDDKSIRNTLLAVMGSAKKSIWIATPYFIPDQETLTLLRLSAISGIDVRILYPGKSDSIISDQASQSYFTPLLKAGASIYSYKDGFMHAKILLVDDKIATIGTANMDVRSFELNYEIISVLYESETVHDIKRDFEDDFKHSTEIKWNAFQKRSIKKRILESFMRLISPLL</sequence>
<name>CLS1_BACAN</name>
<dbReference type="EC" id="2.7.8.-" evidence="1"/>
<dbReference type="EMBL" id="AE016879">
    <property type="protein sequence ID" value="AAP24642.1"/>
    <property type="molecule type" value="Genomic_DNA"/>
</dbReference>
<dbReference type="EMBL" id="AE017334">
    <property type="protein sequence ID" value="AAT29728.1"/>
    <property type="molecule type" value="Genomic_DNA"/>
</dbReference>
<dbReference type="EMBL" id="AE017225">
    <property type="protein sequence ID" value="AAT52920.1"/>
    <property type="molecule type" value="Genomic_DNA"/>
</dbReference>
<dbReference type="RefSeq" id="NP_843156.1">
    <property type="nucleotide sequence ID" value="NC_003997.3"/>
</dbReference>
<dbReference type="RefSeq" id="WP_000742930.1">
    <property type="nucleotide sequence ID" value="NZ_WXXJ01000017.1"/>
</dbReference>
<dbReference type="RefSeq" id="YP_026869.1">
    <property type="nucleotide sequence ID" value="NC_005945.1"/>
</dbReference>
<dbReference type="SMR" id="Q81V75"/>
<dbReference type="STRING" id="261594.GBAA_0625"/>
<dbReference type="DNASU" id="1088023"/>
<dbReference type="GeneID" id="45020686"/>
<dbReference type="KEGG" id="ban:BA_0625"/>
<dbReference type="KEGG" id="banh:HYU01_03385"/>
<dbReference type="KEGG" id="bar:GBAA_0625"/>
<dbReference type="KEGG" id="bat:BAS0592"/>
<dbReference type="PATRIC" id="fig|198094.11.peg.623"/>
<dbReference type="eggNOG" id="COG1502">
    <property type="taxonomic scope" value="Bacteria"/>
</dbReference>
<dbReference type="HOGENOM" id="CLU_038053_1_2_9"/>
<dbReference type="OMA" id="TDEFWTP"/>
<dbReference type="OrthoDB" id="9762009at2"/>
<dbReference type="Proteomes" id="UP000000427">
    <property type="component" value="Chromosome"/>
</dbReference>
<dbReference type="Proteomes" id="UP000000594">
    <property type="component" value="Chromosome"/>
</dbReference>
<dbReference type="GO" id="GO:0005886">
    <property type="term" value="C:plasma membrane"/>
    <property type="evidence" value="ECO:0007669"/>
    <property type="project" value="UniProtKB-SubCell"/>
</dbReference>
<dbReference type="GO" id="GO:0008808">
    <property type="term" value="F:cardiolipin synthase activity"/>
    <property type="evidence" value="ECO:0007669"/>
    <property type="project" value="InterPro"/>
</dbReference>
<dbReference type="GO" id="GO:0032049">
    <property type="term" value="P:cardiolipin biosynthetic process"/>
    <property type="evidence" value="ECO:0007669"/>
    <property type="project" value="InterPro"/>
</dbReference>
<dbReference type="CDD" id="cd09110">
    <property type="entry name" value="PLDc_CLS_1"/>
    <property type="match status" value="1"/>
</dbReference>
<dbReference type="CDD" id="cd09112">
    <property type="entry name" value="PLDc_CLS_2"/>
    <property type="match status" value="1"/>
</dbReference>
<dbReference type="FunFam" id="3.30.870.10:FF:000014">
    <property type="entry name" value="Cardiolipin synthase"/>
    <property type="match status" value="1"/>
</dbReference>
<dbReference type="Gene3D" id="3.30.870.10">
    <property type="entry name" value="Endonuclease Chain A"/>
    <property type="match status" value="2"/>
</dbReference>
<dbReference type="HAMAP" id="MF_01916">
    <property type="entry name" value="Cardiolipin_synth_Cls"/>
    <property type="match status" value="1"/>
</dbReference>
<dbReference type="InterPro" id="IPR030874">
    <property type="entry name" value="Cardiolipin_synth_Firmi"/>
</dbReference>
<dbReference type="InterPro" id="IPR022924">
    <property type="entry name" value="Cardiolipin_synthase"/>
</dbReference>
<dbReference type="InterPro" id="IPR027379">
    <property type="entry name" value="CLS_N"/>
</dbReference>
<dbReference type="InterPro" id="IPR025202">
    <property type="entry name" value="PLD-like_dom"/>
</dbReference>
<dbReference type="InterPro" id="IPR001736">
    <property type="entry name" value="PLipase_D/transphosphatidylase"/>
</dbReference>
<dbReference type="NCBIfam" id="TIGR04265">
    <property type="entry name" value="bac_cardiolipin"/>
    <property type="match status" value="1"/>
</dbReference>
<dbReference type="NCBIfam" id="NF009107">
    <property type="entry name" value="PRK12452.1"/>
    <property type="match status" value="1"/>
</dbReference>
<dbReference type="PANTHER" id="PTHR21248">
    <property type="entry name" value="CARDIOLIPIN SYNTHASE"/>
    <property type="match status" value="1"/>
</dbReference>
<dbReference type="PANTHER" id="PTHR21248:SF20">
    <property type="entry name" value="CARDIOLIPIN SYNTHASE YWIE-RELATED"/>
    <property type="match status" value="1"/>
</dbReference>
<dbReference type="Pfam" id="PF13091">
    <property type="entry name" value="PLDc_2"/>
    <property type="match status" value="2"/>
</dbReference>
<dbReference type="Pfam" id="PF13396">
    <property type="entry name" value="PLDc_N"/>
    <property type="match status" value="1"/>
</dbReference>
<dbReference type="SMART" id="SM00155">
    <property type="entry name" value="PLDc"/>
    <property type="match status" value="2"/>
</dbReference>
<dbReference type="SUPFAM" id="SSF56024">
    <property type="entry name" value="Phospholipase D/nuclease"/>
    <property type="match status" value="2"/>
</dbReference>
<dbReference type="PROSITE" id="PS50035">
    <property type="entry name" value="PLD"/>
    <property type="match status" value="2"/>
</dbReference>
<protein>
    <recommendedName>
        <fullName evidence="1">Cardiolipin synthase 1</fullName>
        <shortName evidence="1">CL synthase 1</shortName>
        <ecNumber evidence="1">2.7.8.-</ecNumber>
    </recommendedName>
</protein>
<proteinExistence type="inferred from homology"/>